<proteinExistence type="inferred from homology"/>
<keyword id="KW-0067">ATP-binding</keyword>
<keyword id="KW-0436">Ligase</keyword>
<keyword id="KW-0460">Magnesium</keyword>
<keyword id="KW-0479">Metal-binding</keyword>
<keyword id="KW-0547">Nucleotide-binding</keyword>
<keyword id="KW-0658">Purine biosynthesis</keyword>
<keyword id="KW-1185">Reference proteome</keyword>
<organism>
    <name type="scientific">Bacillus subtilis (strain 168)</name>
    <dbReference type="NCBI Taxonomy" id="224308"/>
    <lineage>
        <taxon>Bacteria</taxon>
        <taxon>Bacillati</taxon>
        <taxon>Bacillota</taxon>
        <taxon>Bacilli</taxon>
        <taxon>Bacillales</taxon>
        <taxon>Bacillaceae</taxon>
        <taxon>Bacillus</taxon>
    </lineage>
</organism>
<sequence length="384" mass="42093">MYQSKKVLLLGSGELGKEVVIEAQRLGVQTVAVDSYEHAPAMQVAHNSYVVDMLDPEQIRTIIEKENPDLIVPEVEAIATDELLKLEEEGFHVIPNARAAKLTMDREGIRRLAAETLGLATAGYEFANTYDEFIQAAAQIGFPCVVKPLMSSSGKGQSVCRSEADLESCWETAMEGGRVKNGRVIVEEFIPFESEITLLTVRAVNGTAFCEPIGHVQKDGDYIESWQPHDMTEQQIEEAKHIAKTITDELGGYGLFGVELFLAKDRVYFSEVSPRPHDTGLVTLVTQNLSEFALHVRAILGFPITEITQLSPGASRPLKAPEELADYTVEGLENALAVPKTQVRVFGKPITKAGRRMAVALSAADSVETARENAKKALDQLILK</sequence>
<comment type="function">
    <text>Catalyzes two reactions: the first one is the production of beta-formyl glycinamide ribonucleotide (GAR) from formate, ATP and beta GAR; the second, a side reaction, is the production of acetyl phosphate and ADP from acetate and ATP.</text>
</comment>
<comment type="function">
    <text evidence="1">Involved in the de novo purine biosynthesis. Catalyzes the transfer of formate to 5-phospho-ribosyl-glycinamide (GAR), producing 5-phospho-ribosyl-N-formylglycinamide (FGAR). Formate is provided by PurU via hydrolysis of 10-formyl-tetrahydrofolate.</text>
</comment>
<comment type="catalytic activity">
    <reaction evidence="1">
        <text>N(1)-(5-phospho-beta-D-ribosyl)glycinamide + formate + ATP = N(2)-formyl-N(1)-(5-phospho-beta-D-ribosyl)glycinamide + ADP + phosphate + H(+)</text>
        <dbReference type="Rhea" id="RHEA:24829"/>
        <dbReference type="ChEBI" id="CHEBI:15378"/>
        <dbReference type="ChEBI" id="CHEBI:15740"/>
        <dbReference type="ChEBI" id="CHEBI:30616"/>
        <dbReference type="ChEBI" id="CHEBI:43474"/>
        <dbReference type="ChEBI" id="CHEBI:143788"/>
        <dbReference type="ChEBI" id="CHEBI:147286"/>
        <dbReference type="ChEBI" id="CHEBI:456216"/>
        <dbReference type="EC" id="6.3.1.21"/>
    </reaction>
    <physiologicalReaction direction="left-to-right" evidence="1">
        <dbReference type="Rhea" id="RHEA:24830"/>
    </physiologicalReaction>
</comment>
<comment type="pathway">
    <text evidence="1">Purine metabolism; IMP biosynthesis via de novo pathway; N(2)-formyl-N(1)-(5-phospho-D-ribosyl)glycinamide from N(1)-(5-phospho-D-ribosyl)glycinamide (formate route): step 1/1.</text>
</comment>
<comment type="subunit">
    <text evidence="1">Homodimer.</text>
</comment>
<comment type="similarity">
    <text evidence="1">Belongs to the PurK/PurT family.</text>
</comment>
<feature type="chain" id="PRO_0000074955" description="Formate-dependent phosphoribosylglycinamide formyltransferase">
    <location>
        <begin position="1"/>
        <end position="384"/>
    </location>
</feature>
<feature type="domain" description="ATP-grasp" evidence="1">
    <location>
        <begin position="111"/>
        <end position="300"/>
    </location>
</feature>
<feature type="binding site" evidence="1">
    <location>
        <begin position="14"/>
        <end position="15"/>
    </location>
    <ligand>
        <name>N(1)-(5-phospho-beta-D-ribosyl)glycinamide</name>
        <dbReference type="ChEBI" id="CHEBI:143788"/>
    </ligand>
</feature>
<feature type="binding site" evidence="1">
    <location>
        <position position="74"/>
    </location>
    <ligand>
        <name>N(1)-(5-phospho-beta-D-ribosyl)glycinamide</name>
        <dbReference type="ChEBI" id="CHEBI:143788"/>
    </ligand>
</feature>
<feature type="binding site" evidence="1">
    <location>
        <position position="106"/>
    </location>
    <ligand>
        <name>ATP</name>
        <dbReference type="ChEBI" id="CHEBI:30616"/>
    </ligand>
</feature>
<feature type="binding site" evidence="1">
    <location>
        <position position="147"/>
    </location>
    <ligand>
        <name>ATP</name>
        <dbReference type="ChEBI" id="CHEBI:30616"/>
    </ligand>
</feature>
<feature type="binding site" evidence="1">
    <location>
        <begin position="152"/>
        <end position="157"/>
    </location>
    <ligand>
        <name>ATP</name>
        <dbReference type="ChEBI" id="CHEBI:30616"/>
    </ligand>
</feature>
<feature type="binding site" evidence="1">
    <location>
        <begin position="187"/>
        <end position="190"/>
    </location>
    <ligand>
        <name>ATP</name>
        <dbReference type="ChEBI" id="CHEBI:30616"/>
    </ligand>
</feature>
<feature type="binding site" evidence="1">
    <location>
        <position position="195"/>
    </location>
    <ligand>
        <name>ATP</name>
        <dbReference type="ChEBI" id="CHEBI:30616"/>
    </ligand>
</feature>
<feature type="binding site" evidence="1">
    <location>
        <position position="259"/>
    </location>
    <ligand>
        <name>Mg(2+)</name>
        <dbReference type="ChEBI" id="CHEBI:18420"/>
    </ligand>
</feature>
<feature type="binding site" evidence="1">
    <location>
        <position position="271"/>
    </location>
    <ligand>
        <name>Mg(2+)</name>
        <dbReference type="ChEBI" id="CHEBI:18420"/>
    </ligand>
</feature>
<feature type="binding site" evidence="1">
    <location>
        <position position="278"/>
    </location>
    <ligand>
        <name>N(1)-(5-phospho-beta-D-ribosyl)glycinamide</name>
        <dbReference type="ChEBI" id="CHEBI:143788"/>
    </ligand>
</feature>
<feature type="binding site" evidence="1">
    <location>
        <position position="348"/>
    </location>
    <ligand>
        <name>N(1)-(5-phospho-beta-D-ribosyl)glycinamide</name>
        <dbReference type="ChEBI" id="CHEBI:143788"/>
    </ligand>
</feature>
<feature type="binding site" evidence="1">
    <location>
        <begin position="355"/>
        <end position="356"/>
    </location>
    <ligand>
        <name>N(1)-(5-phospho-beta-D-ribosyl)glycinamide</name>
        <dbReference type="ChEBI" id="CHEBI:143788"/>
    </ligand>
</feature>
<feature type="sequence conflict" description="In Ref. 1; CAA55557." evidence="2" ref="1">
    <original>KH</original>
    <variation>ND</variation>
    <location>
        <begin position="240"/>
        <end position="241"/>
    </location>
</feature>
<reference key="1">
    <citation type="journal article" date="1995" name="Microbiology">
        <title>Functional analysis of the Bacillus subtilis purT gene encoding formate-dependent glycinamide ribonucleotide transformylase.</title>
        <authorList>
            <person name="Saxild H.H."/>
            <person name="Jacobsen J.H."/>
            <person name="Nygaard P."/>
        </authorList>
    </citation>
    <scope>NUCLEOTIDE SEQUENCE [GENOMIC DNA]</scope>
    <source>
        <strain>168</strain>
    </source>
</reference>
<reference key="2">
    <citation type="submission" date="1997-07" db="EMBL/GenBank/DDBJ databases">
        <title>Sequence analysis of the 70kb region between 17 and 23 degree of the Bacillus subtilis chromosome.</title>
        <authorList>
            <person name="Haga K."/>
            <person name="Liu H."/>
            <person name="Yasumoto K."/>
            <person name="Takahashi H."/>
            <person name="Yoshikawa H."/>
        </authorList>
    </citation>
    <scope>NUCLEOTIDE SEQUENCE [GENOMIC DNA]</scope>
    <source>
        <strain>168</strain>
    </source>
</reference>
<reference key="3">
    <citation type="journal article" date="1997" name="Nature">
        <title>The complete genome sequence of the Gram-positive bacterium Bacillus subtilis.</title>
        <authorList>
            <person name="Kunst F."/>
            <person name="Ogasawara N."/>
            <person name="Moszer I."/>
            <person name="Albertini A.M."/>
            <person name="Alloni G."/>
            <person name="Azevedo V."/>
            <person name="Bertero M.G."/>
            <person name="Bessieres P."/>
            <person name="Bolotin A."/>
            <person name="Borchert S."/>
            <person name="Borriss R."/>
            <person name="Boursier L."/>
            <person name="Brans A."/>
            <person name="Braun M."/>
            <person name="Brignell S.C."/>
            <person name="Bron S."/>
            <person name="Brouillet S."/>
            <person name="Bruschi C.V."/>
            <person name="Caldwell B."/>
            <person name="Capuano V."/>
            <person name="Carter N.M."/>
            <person name="Choi S.-K."/>
            <person name="Codani J.-J."/>
            <person name="Connerton I.F."/>
            <person name="Cummings N.J."/>
            <person name="Daniel R.A."/>
            <person name="Denizot F."/>
            <person name="Devine K.M."/>
            <person name="Duesterhoeft A."/>
            <person name="Ehrlich S.D."/>
            <person name="Emmerson P.T."/>
            <person name="Entian K.-D."/>
            <person name="Errington J."/>
            <person name="Fabret C."/>
            <person name="Ferrari E."/>
            <person name="Foulger D."/>
            <person name="Fritz C."/>
            <person name="Fujita M."/>
            <person name="Fujita Y."/>
            <person name="Fuma S."/>
            <person name="Galizzi A."/>
            <person name="Galleron N."/>
            <person name="Ghim S.-Y."/>
            <person name="Glaser P."/>
            <person name="Goffeau A."/>
            <person name="Golightly E.J."/>
            <person name="Grandi G."/>
            <person name="Guiseppi G."/>
            <person name="Guy B.J."/>
            <person name="Haga K."/>
            <person name="Haiech J."/>
            <person name="Harwood C.R."/>
            <person name="Henaut A."/>
            <person name="Hilbert H."/>
            <person name="Holsappel S."/>
            <person name="Hosono S."/>
            <person name="Hullo M.-F."/>
            <person name="Itaya M."/>
            <person name="Jones L.-M."/>
            <person name="Joris B."/>
            <person name="Karamata D."/>
            <person name="Kasahara Y."/>
            <person name="Klaerr-Blanchard M."/>
            <person name="Klein C."/>
            <person name="Kobayashi Y."/>
            <person name="Koetter P."/>
            <person name="Koningstein G."/>
            <person name="Krogh S."/>
            <person name="Kumano M."/>
            <person name="Kurita K."/>
            <person name="Lapidus A."/>
            <person name="Lardinois S."/>
            <person name="Lauber J."/>
            <person name="Lazarevic V."/>
            <person name="Lee S.-M."/>
            <person name="Levine A."/>
            <person name="Liu H."/>
            <person name="Masuda S."/>
            <person name="Mauel C."/>
            <person name="Medigue C."/>
            <person name="Medina N."/>
            <person name="Mellado R.P."/>
            <person name="Mizuno M."/>
            <person name="Moestl D."/>
            <person name="Nakai S."/>
            <person name="Noback M."/>
            <person name="Noone D."/>
            <person name="O'Reilly M."/>
            <person name="Ogawa K."/>
            <person name="Ogiwara A."/>
            <person name="Oudega B."/>
            <person name="Park S.-H."/>
            <person name="Parro V."/>
            <person name="Pohl T.M."/>
            <person name="Portetelle D."/>
            <person name="Porwollik S."/>
            <person name="Prescott A.M."/>
            <person name="Presecan E."/>
            <person name="Pujic P."/>
            <person name="Purnelle B."/>
            <person name="Rapoport G."/>
            <person name="Rey M."/>
            <person name="Reynolds S."/>
            <person name="Rieger M."/>
            <person name="Rivolta C."/>
            <person name="Rocha E."/>
            <person name="Roche B."/>
            <person name="Rose M."/>
            <person name="Sadaie Y."/>
            <person name="Sato T."/>
            <person name="Scanlan E."/>
            <person name="Schleich S."/>
            <person name="Schroeter R."/>
            <person name="Scoffone F."/>
            <person name="Sekiguchi J."/>
            <person name="Sekowska A."/>
            <person name="Seror S.J."/>
            <person name="Serror P."/>
            <person name="Shin B.-S."/>
            <person name="Soldo B."/>
            <person name="Sorokin A."/>
            <person name="Tacconi E."/>
            <person name="Takagi T."/>
            <person name="Takahashi H."/>
            <person name="Takemaru K."/>
            <person name="Takeuchi M."/>
            <person name="Tamakoshi A."/>
            <person name="Tanaka T."/>
            <person name="Terpstra P."/>
            <person name="Tognoni A."/>
            <person name="Tosato V."/>
            <person name="Uchiyama S."/>
            <person name="Vandenbol M."/>
            <person name="Vannier F."/>
            <person name="Vassarotti A."/>
            <person name="Viari A."/>
            <person name="Wambutt R."/>
            <person name="Wedler E."/>
            <person name="Wedler H."/>
            <person name="Weitzenegger T."/>
            <person name="Winters P."/>
            <person name="Wipat A."/>
            <person name="Yamamoto H."/>
            <person name="Yamane K."/>
            <person name="Yasumoto K."/>
            <person name="Yata K."/>
            <person name="Yoshida K."/>
            <person name="Yoshikawa H.-F."/>
            <person name="Zumstein E."/>
            <person name="Yoshikawa H."/>
            <person name="Danchin A."/>
        </authorList>
    </citation>
    <scope>NUCLEOTIDE SEQUENCE [LARGE SCALE GENOMIC DNA]</scope>
    <source>
        <strain>168</strain>
    </source>
</reference>
<protein>
    <recommendedName>
        <fullName evidence="1">Formate-dependent phosphoribosylglycinamide formyltransferase</fullName>
        <ecNumber evidence="1">6.3.1.21</ecNumber>
    </recommendedName>
    <alternativeName>
        <fullName evidence="1">5'-phosphoribosylglycinamide transformylase 2</fullName>
    </alternativeName>
    <alternativeName>
        <fullName evidence="1">Formate-dependent GAR transformylase</fullName>
    </alternativeName>
    <alternativeName>
        <fullName evidence="1">GAR transformylase 2</fullName>
        <shortName evidence="1">GART 2</shortName>
    </alternativeName>
    <alternativeName>
        <fullName evidence="1">Non-folate glycinamide ribonucleotide transformylase</fullName>
    </alternativeName>
    <alternativeName>
        <fullName evidence="1">Phosphoribosylglycinamide formyltransferase 2</fullName>
    </alternativeName>
</protein>
<accession>P39771</accession>
<accession>O31450</accession>
<dbReference type="EC" id="6.3.1.21" evidence="1"/>
<dbReference type="EMBL" id="X78962">
    <property type="protein sequence ID" value="CAA55557.1"/>
    <property type="molecule type" value="Genomic_DNA"/>
</dbReference>
<dbReference type="EMBL" id="AB006424">
    <property type="protein sequence ID" value="BAA33120.1"/>
    <property type="molecule type" value="Genomic_DNA"/>
</dbReference>
<dbReference type="EMBL" id="AL009126">
    <property type="protein sequence ID" value="CAB12017.1"/>
    <property type="molecule type" value="Genomic_DNA"/>
</dbReference>
<dbReference type="PIR" id="E69685">
    <property type="entry name" value="E69685"/>
</dbReference>
<dbReference type="RefSeq" id="NP_388105.1">
    <property type="nucleotide sequence ID" value="NC_000964.3"/>
</dbReference>
<dbReference type="RefSeq" id="WP_003246432.1">
    <property type="nucleotide sequence ID" value="NZ_OZ025638.1"/>
</dbReference>
<dbReference type="SMR" id="P39771"/>
<dbReference type="FunCoup" id="P39771">
    <property type="interactions" value="130"/>
</dbReference>
<dbReference type="STRING" id="224308.BSU02230"/>
<dbReference type="jPOST" id="P39771"/>
<dbReference type="PaxDb" id="224308-BSU02230"/>
<dbReference type="EnsemblBacteria" id="CAB12017">
    <property type="protein sequence ID" value="CAB12017"/>
    <property type="gene ID" value="BSU_02230"/>
</dbReference>
<dbReference type="GeneID" id="938438"/>
<dbReference type="KEGG" id="bsu:BSU02230"/>
<dbReference type="PATRIC" id="fig|224308.179.peg.229"/>
<dbReference type="eggNOG" id="COG0027">
    <property type="taxonomic scope" value="Bacteria"/>
</dbReference>
<dbReference type="InParanoid" id="P39771"/>
<dbReference type="OrthoDB" id="9804625at2"/>
<dbReference type="PhylomeDB" id="P39771"/>
<dbReference type="BioCyc" id="BSUB:BSU02230-MONOMER"/>
<dbReference type="UniPathway" id="UPA00074">
    <property type="reaction ID" value="UER00127"/>
</dbReference>
<dbReference type="Proteomes" id="UP000001570">
    <property type="component" value="Chromosome"/>
</dbReference>
<dbReference type="GO" id="GO:0005829">
    <property type="term" value="C:cytosol"/>
    <property type="evidence" value="ECO:0000318"/>
    <property type="project" value="GO_Central"/>
</dbReference>
<dbReference type="GO" id="GO:0005524">
    <property type="term" value="F:ATP binding"/>
    <property type="evidence" value="ECO:0007669"/>
    <property type="project" value="UniProtKB-UniRule"/>
</dbReference>
<dbReference type="GO" id="GO:0000287">
    <property type="term" value="F:magnesium ion binding"/>
    <property type="evidence" value="ECO:0007669"/>
    <property type="project" value="InterPro"/>
</dbReference>
<dbReference type="GO" id="GO:0043815">
    <property type="term" value="F:phosphoribosylglycinamide formyltransferase 2 activity"/>
    <property type="evidence" value="ECO:0007669"/>
    <property type="project" value="UniProtKB-UniRule"/>
</dbReference>
<dbReference type="GO" id="GO:0004644">
    <property type="term" value="F:phosphoribosylglycinamide formyltransferase activity"/>
    <property type="evidence" value="ECO:0007669"/>
    <property type="project" value="InterPro"/>
</dbReference>
<dbReference type="GO" id="GO:0006189">
    <property type="term" value="P:'de novo' IMP biosynthetic process"/>
    <property type="evidence" value="ECO:0007669"/>
    <property type="project" value="UniProtKB-UniRule"/>
</dbReference>
<dbReference type="FunFam" id="3.30.1490.20:FF:000013">
    <property type="entry name" value="Formate-dependent phosphoribosylglycinamide formyltransferase"/>
    <property type="match status" value="1"/>
</dbReference>
<dbReference type="Gene3D" id="3.40.50.20">
    <property type="match status" value="1"/>
</dbReference>
<dbReference type="Gene3D" id="3.30.1490.20">
    <property type="entry name" value="ATP-grasp fold, A domain"/>
    <property type="match status" value="1"/>
</dbReference>
<dbReference type="Gene3D" id="3.30.470.20">
    <property type="entry name" value="ATP-grasp fold, B domain"/>
    <property type="match status" value="1"/>
</dbReference>
<dbReference type="HAMAP" id="MF_01643">
    <property type="entry name" value="PurT"/>
    <property type="match status" value="1"/>
</dbReference>
<dbReference type="InterPro" id="IPR011761">
    <property type="entry name" value="ATP-grasp"/>
</dbReference>
<dbReference type="InterPro" id="IPR003135">
    <property type="entry name" value="ATP-grasp_carboxylate-amine"/>
</dbReference>
<dbReference type="InterPro" id="IPR013815">
    <property type="entry name" value="ATP_grasp_subdomain_1"/>
</dbReference>
<dbReference type="InterPro" id="IPR016185">
    <property type="entry name" value="PreATP-grasp_dom_sf"/>
</dbReference>
<dbReference type="InterPro" id="IPR005862">
    <property type="entry name" value="PurT"/>
</dbReference>
<dbReference type="InterPro" id="IPR054350">
    <property type="entry name" value="PurT/PurK_preATP-grasp"/>
</dbReference>
<dbReference type="InterPro" id="IPR048740">
    <property type="entry name" value="PurT_C"/>
</dbReference>
<dbReference type="InterPro" id="IPR011054">
    <property type="entry name" value="Rudment_hybrid_motif"/>
</dbReference>
<dbReference type="NCBIfam" id="NF006766">
    <property type="entry name" value="PRK09288.1"/>
    <property type="match status" value="1"/>
</dbReference>
<dbReference type="NCBIfam" id="TIGR01142">
    <property type="entry name" value="purT"/>
    <property type="match status" value="1"/>
</dbReference>
<dbReference type="PANTHER" id="PTHR43055">
    <property type="entry name" value="FORMATE-DEPENDENT PHOSPHORIBOSYLGLYCINAMIDE FORMYLTRANSFERASE"/>
    <property type="match status" value="1"/>
</dbReference>
<dbReference type="PANTHER" id="PTHR43055:SF1">
    <property type="entry name" value="FORMATE-DEPENDENT PHOSPHORIBOSYLGLYCINAMIDE FORMYLTRANSFERASE"/>
    <property type="match status" value="1"/>
</dbReference>
<dbReference type="Pfam" id="PF02222">
    <property type="entry name" value="ATP-grasp"/>
    <property type="match status" value="1"/>
</dbReference>
<dbReference type="Pfam" id="PF21244">
    <property type="entry name" value="PurT_C"/>
    <property type="match status" value="1"/>
</dbReference>
<dbReference type="Pfam" id="PF22660">
    <property type="entry name" value="RS_preATP-grasp-like"/>
    <property type="match status" value="1"/>
</dbReference>
<dbReference type="SUPFAM" id="SSF56059">
    <property type="entry name" value="Glutathione synthetase ATP-binding domain-like"/>
    <property type="match status" value="1"/>
</dbReference>
<dbReference type="SUPFAM" id="SSF52440">
    <property type="entry name" value="PreATP-grasp domain"/>
    <property type="match status" value="1"/>
</dbReference>
<dbReference type="SUPFAM" id="SSF51246">
    <property type="entry name" value="Rudiment single hybrid motif"/>
    <property type="match status" value="1"/>
</dbReference>
<dbReference type="PROSITE" id="PS50975">
    <property type="entry name" value="ATP_GRASP"/>
    <property type="match status" value="1"/>
</dbReference>
<name>PURT_BACSU</name>
<gene>
    <name evidence="1" type="primary">purT</name>
    <name type="ordered locus">BSU02230</name>
</gene>
<evidence type="ECO:0000255" key="1">
    <source>
        <dbReference type="HAMAP-Rule" id="MF_01643"/>
    </source>
</evidence>
<evidence type="ECO:0000305" key="2"/>